<comment type="function">
    <text evidence="2">One of the essential components for the initiation of protein synthesis. Protects formylmethionyl-tRNA from spontaneous hydrolysis and promotes its binding to the 30S ribosomal subunits. Also involved in the hydrolysis of GTP during the formation of the 70S ribosomal complex.</text>
</comment>
<comment type="subcellular location">
    <subcellularLocation>
        <location evidence="2">Cytoplasm</location>
    </subcellularLocation>
</comment>
<comment type="similarity">
    <text evidence="2">Belongs to the TRAFAC class translation factor GTPase superfamily. Classic translation factor GTPase family. IF-2 subfamily.</text>
</comment>
<sequence length="930" mass="102937">MSKKRLYEIAKELGKESKEVVARAKELGLDVKSHSSSVEEAVAAKIAASFKPAAAPKVEAKPAAPKVSAEKKTEKSEPAKPAVAKEEAKPAEPVAPKTEKVAAKPQSRNFKAEREARAKEQAERRKQNKGNNRDQQQNGNRQKNDGRNGGKQGQSNRDNRRFNDQAKKQQGQQKRRNERRQQEDKRSNQAAPRIDFKARAAALKAEQNAEYARSSEERFKQYQAAKEALAQANKRKEPEEIFEEAAKLAEQAQQVQAVVEVVPEKKEPAVDTRRKKQARPDKNRDDYDHEEDGPRKQQKNRSSQNQVRNQKNSNWNNNKKNKKGNNKNNRNQTPKPVTERKFHELPTEFEYTDGMTVAEIAKRIKREPAEIVKKLFMMGVMATQNQSLDGETIELLMVDYGIEAKQKVEVDNADIERFFVEDGYLNEDELVERPPVVTIMGHVDHGKTTLLDTLRNSRVATGEAGGITQHIGAYQIVENGKKITFLDTPGHAAFTSMRARGASVTDITILVVAADDGVMPQTIEAINHSKAANVPIIVAINKIDKPGANPERVIGELAEHGVMSTAWGGDSEFVEISAKFNQNIEELLETVLLVAEIQELKADPTVRAIGTVIEARLDKGKGAVATLLVQQGTLNVQDPIVVGNTFGRVRAMTNDLGRRVKVAGPSTPVSITGLNEAPMAGDHFAVYEDEKSARAAGEERAKRALMKQRQATQRVSLENLFDTLKAGELKSVNVIIKADVQGSVEALSASLQKIDVEGVKVTIVHSAVGAINESDVTLAEASNAFIVGFNVRPTPQARQQAEADDVEIRLHSIIYKVIEEMEEAMKGMLDPEFEEKVIGEAVIRETFKVSKVGTIGGFMVINGKVARDSKVRVIRDGVVIYDGELASLKHYKDDVKEVTNGREGGLMIDGYNDIKMDDVIEAYVMEEIKR</sequence>
<accession>Q8DQV2</accession>
<feature type="chain" id="PRO_0000137264" description="Translation initiation factor IF-2">
    <location>
        <begin position="1"/>
        <end position="930"/>
    </location>
</feature>
<feature type="domain" description="tr-type G">
    <location>
        <begin position="432"/>
        <end position="599"/>
    </location>
</feature>
<feature type="region of interest" description="Disordered" evidence="3">
    <location>
        <begin position="50"/>
        <end position="195"/>
    </location>
</feature>
<feature type="region of interest" description="Disordered" evidence="3">
    <location>
        <begin position="260"/>
        <end position="346"/>
    </location>
</feature>
<feature type="region of interest" description="G1" evidence="1">
    <location>
        <begin position="441"/>
        <end position="448"/>
    </location>
</feature>
<feature type="region of interest" description="G2" evidence="1">
    <location>
        <begin position="466"/>
        <end position="470"/>
    </location>
</feature>
<feature type="region of interest" description="G3" evidence="1">
    <location>
        <begin position="487"/>
        <end position="490"/>
    </location>
</feature>
<feature type="region of interest" description="G4" evidence="1">
    <location>
        <begin position="541"/>
        <end position="544"/>
    </location>
</feature>
<feature type="region of interest" description="G5" evidence="1">
    <location>
        <begin position="577"/>
        <end position="579"/>
    </location>
</feature>
<feature type="compositionally biased region" description="Low complexity" evidence="3">
    <location>
        <begin position="50"/>
        <end position="67"/>
    </location>
</feature>
<feature type="compositionally biased region" description="Basic and acidic residues" evidence="3">
    <location>
        <begin position="68"/>
        <end position="90"/>
    </location>
</feature>
<feature type="compositionally biased region" description="Basic and acidic residues" evidence="3">
    <location>
        <begin position="110"/>
        <end position="125"/>
    </location>
</feature>
<feature type="compositionally biased region" description="Low complexity" evidence="3">
    <location>
        <begin position="129"/>
        <end position="141"/>
    </location>
</feature>
<feature type="compositionally biased region" description="Basic and acidic residues" evidence="3">
    <location>
        <begin position="157"/>
        <end position="167"/>
    </location>
</feature>
<feature type="compositionally biased region" description="Basic and acidic residues" evidence="3">
    <location>
        <begin position="262"/>
        <end position="295"/>
    </location>
</feature>
<feature type="compositionally biased region" description="Low complexity" evidence="3">
    <location>
        <begin position="309"/>
        <end position="318"/>
    </location>
</feature>
<feature type="compositionally biased region" description="Basic and acidic residues" evidence="3">
    <location>
        <begin position="337"/>
        <end position="346"/>
    </location>
</feature>
<feature type="binding site" evidence="2">
    <location>
        <begin position="441"/>
        <end position="448"/>
    </location>
    <ligand>
        <name>GTP</name>
        <dbReference type="ChEBI" id="CHEBI:37565"/>
    </ligand>
</feature>
<feature type="binding site" evidence="2">
    <location>
        <begin position="487"/>
        <end position="491"/>
    </location>
    <ligand>
        <name>GTP</name>
        <dbReference type="ChEBI" id="CHEBI:37565"/>
    </ligand>
</feature>
<feature type="binding site" evidence="2">
    <location>
        <begin position="541"/>
        <end position="544"/>
    </location>
    <ligand>
        <name>GTP</name>
        <dbReference type="ChEBI" id="CHEBI:37565"/>
    </ligand>
</feature>
<reference key="1">
    <citation type="journal article" date="2001" name="J. Bacteriol.">
        <title>Genome of the bacterium Streptococcus pneumoniae strain R6.</title>
        <authorList>
            <person name="Hoskins J."/>
            <person name="Alborn W.E. Jr."/>
            <person name="Arnold J."/>
            <person name="Blaszczak L.C."/>
            <person name="Burgett S."/>
            <person name="DeHoff B.S."/>
            <person name="Estrem S.T."/>
            <person name="Fritz L."/>
            <person name="Fu D.-J."/>
            <person name="Fuller W."/>
            <person name="Geringer C."/>
            <person name="Gilmour R."/>
            <person name="Glass J.S."/>
            <person name="Khoja H."/>
            <person name="Kraft A.R."/>
            <person name="Lagace R.E."/>
            <person name="LeBlanc D.J."/>
            <person name="Lee L.N."/>
            <person name="Lefkowitz E.J."/>
            <person name="Lu J."/>
            <person name="Matsushima P."/>
            <person name="McAhren S.M."/>
            <person name="McHenney M."/>
            <person name="McLeaster K."/>
            <person name="Mundy C.W."/>
            <person name="Nicas T.I."/>
            <person name="Norris F.H."/>
            <person name="O'Gara M."/>
            <person name="Peery R.B."/>
            <person name="Robertson G.T."/>
            <person name="Rockey P."/>
            <person name="Sun P.-M."/>
            <person name="Winkler M.E."/>
            <person name="Yang Y."/>
            <person name="Young-Bellido M."/>
            <person name="Zhao G."/>
            <person name="Zook C.A."/>
            <person name="Baltz R.H."/>
            <person name="Jaskunas S.R."/>
            <person name="Rosteck P.R. Jr."/>
            <person name="Skatrud P.L."/>
            <person name="Glass J.I."/>
        </authorList>
    </citation>
    <scope>NUCLEOTIDE SEQUENCE [LARGE SCALE GENOMIC DNA]</scope>
    <source>
        <strain>ATCC BAA-255 / R6</strain>
    </source>
</reference>
<dbReference type="EMBL" id="AE007317">
    <property type="protein sequence ID" value="AAK99285.1"/>
    <property type="molecule type" value="Genomic_DNA"/>
</dbReference>
<dbReference type="PIR" id="A97932">
    <property type="entry name" value="A97932"/>
</dbReference>
<dbReference type="RefSeq" id="NP_358075.1">
    <property type="nucleotide sequence ID" value="NC_003098.1"/>
</dbReference>
<dbReference type="RefSeq" id="WP_000039219.1">
    <property type="nucleotide sequence ID" value="NC_003098.1"/>
</dbReference>
<dbReference type="SMR" id="Q8DQV2"/>
<dbReference type="STRING" id="171101.spr0481"/>
<dbReference type="KEGG" id="spr:spr0481"/>
<dbReference type="PATRIC" id="fig|171101.6.peg.528"/>
<dbReference type="eggNOG" id="COG0532">
    <property type="taxonomic scope" value="Bacteria"/>
</dbReference>
<dbReference type="HOGENOM" id="CLU_006301_5_0_9"/>
<dbReference type="Proteomes" id="UP000000586">
    <property type="component" value="Chromosome"/>
</dbReference>
<dbReference type="GO" id="GO:0005737">
    <property type="term" value="C:cytoplasm"/>
    <property type="evidence" value="ECO:0000318"/>
    <property type="project" value="GO_Central"/>
</dbReference>
<dbReference type="GO" id="GO:0005829">
    <property type="term" value="C:cytosol"/>
    <property type="evidence" value="ECO:0000318"/>
    <property type="project" value="GO_Central"/>
</dbReference>
<dbReference type="GO" id="GO:0005525">
    <property type="term" value="F:GTP binding"/>
    <property type="evidence" value="ECO:0007669"/>
    <property type="project" value="UniProtKB-KW"/>
</dbReference>
<dbReference type="GO" id="GO:0003924">
    <property type="term" value="F:GTPase activity"/>
    <property type="evidence" value="ECO:0007669"/>
    <property type="project" value="UniProtKB-UniRule"/>
</dbReference>
<dbReference type="GO" id="GO:0003743">
    <property type="term" value="F:translation initiation factor activity"/>
    <property type="evidence" value="ECO:0000318"/>
    <property type="project" value="GO_Central"/>
</dbReference>
<dbReference type="GO" id="GO:0006413">
    <property type="term" value="P:translational initiation"/>
    <property type="evidence" value="ECO:0000318"/>
    <property type="project" value="GO_Central"/>
</dbReference>
<dbReference type="CDD" id="cd01887">
    <property type="entry name" value="IF2_eIF5B"/>
    <property type="match status" value="1"/>
</dbReference>
<dbReference type="CDD" id="cd03702">
    <property type="entry name" value="IF2_mtIF2_II"/>
    <property type="match status" value="1"/>
</dbReference>
<dbReference type="CDD" id="cd03692">
    <property type="entry name" value="mtIF2_IVc"/>
    <property type="match status" value="1"/>
</dbReference>
<dbReference type="FunFam" id="1.10.10.2480:FF:000003">
    <property type="entry name" value="Translation initiation factor IF-2"/>
    <property type="match status" value="1"/>
</dbReference>
<dbReference type="FunFam" id="2.40.30.10:FF:000007">
    <property type="entry name" value="Translation initiation factor IF-2"/>
    <property type="match status" value="1"/>
</dbReference>
<dbReference type="FunFam" id="2.40.30.10:FF:000008">
    <property type="entry name" value="Translation initiation factor IF-2"/>
    <property type="match status" value="1"/>
</dbReference>
<dbReference type="FunFam" id="3.40.50.10050:FF:000001">
    <property type="entry name" value="Translation initiation factor IF-2"/>
    <property type="match status" value="1"/>
</dbReference>
<dbReference type="FunFam" id="3.40.50.300:FF:000019">
    <property type="entry name" value="Translation initiation factor IF-2"/>
    <property type="match status" value="1"/>
</dbReference>
<dbReference type="Gene3D" id="1.10.10.2480">
    <property type="match status" value="1"/>
</dbReference>
<dbReference type="Gene3D" id="3.40.50.300">
    <property type="entry name" value="P-loop containing nucleotide triphosphate hydrolases"/>
    <property type="match status" value="1"/>
</dbReference>
<dbReference type="Gene3D" id="2.40.30.10">
    <property type="entry name" value="Translation factors"/>
    <property type="match status" value="2"/>
</dbReference>
<dbReference type="Gene3D" id="3.40.50.10050">
    <property type="entry name" value="Translation initiation factor IF- 2, domain 3"/>
    <property type="match status" value="1"/>
</dbReference>
<dbReference type="HAMAP" id="MF_00100_B">
    <property type="entry name" value="IF_2_B"/>
    <property type="match status" value="1"/>
</dbReference>
<dbReference type="InterPro" id="IPR053905">
    <property type="entry name" value="EF-G-like_DII"/>
</dbReference>
<dbReference type="InterPro" id="IPR044145">
    <property type="entry name" value="IF2_II"/>
</dbReference>
<dbReference type="InterPro" id="IPR006847">
    <property type="entry name" value="IF2_N"/>
</dbReference>
<dbReference type="InterPro" id="IPR027417">
    <property type="entry name" value="P-loop_NTPase"/>
</dbReference>
<dbReference type="InterPro" id="IPR005225">
    <property type="entry name" value="Small_GTP-bd"/>
</dbReference>
<dbReference type="InterPro" id="IPR000795">
    <property type="entry name" value="T_Tr_GTP-bd_dom"/>
</dbReference>
<dbReference type="InterPro" id="IPR000178">
    <property type="entry name" value="TF_IF2_bacterial-like"/>
</dbReference>
<dbReference type="InterPro" id="IPR015760">
    <property type="entry name" value="TIF_IF2"/>
</dbReference>
<dbReference type="InterPro" id="IPR023115">
    <property type="entry name" value="TIF_IF2_dom3"/>
</dbReference>
<dbReference type="InterPro" id="IPR036925">
    <property type="entry name" value="TIF_IF2_dom3_sf"/>
</dbReference>
<dbReference type="InterPro" id="IPR009000">
    <property type="entry name" value="Transl_B-barrel_sf"/>
</dbReference>
<dbReference type="NCBIfam" id="TIGR00487">
    <property type="entry name" value="IF-2"/>
    <property type="match status" value="1"/>
</dbReference>
<dbReference type="NCBIfam" id="TIGR00231">
    <property type="entry name" value="small_GTP"/>
    <property type="match status" value="1"/>
</dbReference>
<dbReference type="PANTHER" id="PTHR43381:SF5">
    <property type="entry name" value="TR-TYPE G DOMAIN-CONTAINING PROTEIN"/>
    <property type="match status" value="1"/>
</dbReference>
<dbReference type="PANTHER" id="PTHR43381">
    <property type="entry name" value="TRANSLATION INITIATION FACTOR IF-2-RELATED"/>
    <property type="match status" value="1"/>
</dbReference>
<dbReference type="Pfam" id="PF22042">
    <property type="entry name" value="EF-G_D2"/>
    <property type="match status" value="1"/>
</dbReference>
<dbReference type="Pfam" id="PF00009">
    <property type="entry name" value="GTP_EFTU"/>
    <property type="match status" value="1"/>
</dbReference>
<dbReference type="Pfam" id="PF11987">
    <property type="entry name" value="IF-2"/>
    <property type="match status" value="1"/>
</dbReference>
<dbReference type="Pfam" id="PF04760">
    <property type="entry name" value="IF2_N"/>
    <property type="match status" value="2"/>
</dbReference>
<dbReference type="SUPFAM" id="SSF52156">
    <property type="entry name" value="Initiation factor IF2/eIF5b, domain 3"/>
    <property type="match status" value="1"/>
</dbReference>
<dbReference type="SUPFAM" id="SSF52540">
    <property type="entry name" value="P-loop containing nucleoside triphosphate hydrolases"/>
    <property type="match status" value="1"/>
</dbReference>
<dbReference type="SUPFAM" id="SSF50447">
    <property type="entry name" value="Translation proteins"/>
    <property type="match status" value="2"/>
</dbReference>
<dbReference type="PROSITE" id="PS51722">
    <property type="entry name" value="G_TR_2"/>
    <property type="match status" value="1"/>
</dbReference>
<dbReference type="PROSITE" id="PS01176">
    <property type="entry name" value="IF2"/>
    <property type="match status" value="1"/>
</dbReference>
<keyword id="KW-0963">Cytoplasm</keyword>
<keyword id="KW-0342">GTP-binding</keyword>
<keyword id="KW-0396">Initiation factor</keyword>
<keyword id="KW-0547">Nucleotide-binding</keyword>
<keyword id="KW-0648">Protein biosynthesis</keyword>
<keyword id="KW-1185">Reference proteome</keyword>
<organism>
    <name type="scientific">Streptococcus pneumoniae (strain ATCC BAA-255 / R6)</name>
    <dbReference type="NCBI Taxonomy" id="171101"/>
    <lineage>
        <taxon>Bacteria</taxon>
        <taxon>Bacillati</taxon>
        <taxon>Bacillota</taxon>
        <taxon>Bacilli</taxon>
        <taxon>Lactobacillales</taxon>
        <taxon>Streptococcaceae</taxon>
        <taxon>Streptococcus</taxon>
    </lineage>
</organism>
<evidence type="ECO:0000250" key="1"/>
<evidence type="ECO:0000255" key="2">
    <source>
        <dbReference type="HAMAP-Rule" id="MF_00100"/>
    </source>
</evidence>
<evidence type="ECO:0000256" key="3">
    <source>
        <dbReference type="SAM" id="MobiDB-lite"/>
    </source>
</evidence>
<name>IF2_STRR6</name>
<proteinExistence type="inferred from homology"/>
<protein>
    <recommendedName>
        <fullName evidence="2">Translation initiation factor IF-2</fullName>
    </recommendedName>
</protein>
<gene>
    <name evidence="2" type="primary">infB</name>
    <name type="ordered locus">spr0481</name>
</gene>